<feature type="peptide" id="PRO_0000045037" description="U1-nemetoxin-Csp1c">
    <location>
        <begin position="1"/>
        <end position="39"/>
    </location>
</feature>
<feature type="disulfide bond" evidence="2">
    <location>
        <begin position="1"/>
        <end position="15"/>
    </location>
</feature>
<feature type="disulfide bond" evidence="2">
    <location>
        <begin position="8"/>
        <end position="19"/>
    </location>
</feature>
<feature type="disulfide bond" evidence="2">
    <location>
        <begin position="14"/>
        <end position="36"/>
    </location>
</feature>
<feature type="disulfide bond" evidence="2">
    <location>
        <begin position="25"/>
        <end position="32"/>
    </location>
</feature>
<evidence type="ECO:0000250" key="1"/>
<evidence type="ECO:0000250" key="2">
    <source>
        <dbReference type="UniProtKB" id="P49268"/>
    </source>
</evidence>
<evidence type="ECO:0000269" key="3">
    <source ref="1"/>
</evidence>
<evidence type="ECO:0000303" key="4">
    <source ref="1"/>
</evidence>
<evidence type="ECO:0000305" key="5"/>
<keyword id="KW-0903">Direct protein sequencing</keyword>
<keyword id="KW-1015">Disulfide bond</keyword>
<keyword id="KW-0960">Knottin</keyword>
<keyword id="KW-0964">Secreted</keyword>
<keyword id="KW-0800">Toxin</keyword>
<reference key="1">
    <citation type="patent" date="1997-11-18" number="US5688764">
        <title>Insecticidal peptides from spider venom.</title>
        <authorList>
            <person name="Johnson J.H."/>
            <person name="Kral R.M. Jr."/>
            <person name="Krapcho K."/>
        </authorList>
    </citation>
    <scope>NUCLEOTIDE SEQUENCE [MRNA]</scope>
    <scope>PROTEIN SEQUENCE</scope>
    <scope>MASS SPECTROMETRY</scope>
    <source>
        <tissue>Venom</tissue>
        <tissue>Venom gland</tissue>
    </source>
</reference>
<sequence>CISARYPCSNSKDCCSGSCGIFWTCYLRKDPCSKECLAP</sequence>
<organism>
    <name type="scientific">Calisoga sp.</name>
    <name type="common">Spider</name>
    <dbReference type="NCBI Taxonomy" id="269418"/>
    <lineage>
        <taxon>Eukaryota</taxon>
        <taxon>Metazoa</taxon>
        <taxon>Ecdysozoa</taxon>
        <taxon>Arthropoda</taxon>
        <taxon>Chelicerata</taxon>
        <taxon>Arachnida</taxon>
        <taxon>Araneae</taxon>
        <taxon>Mygalomorphae</taxon>
        <taxon>Nemesiidae</taxon>
        <taxon>Calisoga</taxon>
    </lineage>
</organism>
<protein>
    <recommendedName>
        <fullName>U1-nemetoxin-Csp1c</fullName>
        <shortName>U1-NETX-Csp1a</shortName>
    </recommendedName>
    <alternativeName>
        <fullName evidence="4">Toxic peptide C</fullName>
    </alternativeName>
</protein>
<name>CALC_CALS5</name>
<proteinExistence type="evidence at protein level"/>
<comment type="function">
    <text>Causes paralysis to insect larvae (H.virescens). This toxin is active only on insects.</text>
</comment>
<comment type="subcellular location">
    <subcellularLocation>
        <location>Secreted</location>
    </subcellularLocation>
</comment>
<comment type="tissue specificity">
    <text>Expressed by the venom gland.</text>
</comment>
<comment type="domain">
    <text evidence="1">The presence of a 'disulfide through disulfide knot' structurally defines this protein as a knottin.</text>
</comment>
<comment type="mass spectrometry"/>
<comment type="similarity">
    <text evidence="5">Belongs to the neurotoxin 13 (insecticidal toxin ABC) family. 02 (Calisoga) subfamily.</text>
</comment>
<dbReference type="SMR" id="P60978"/>
<dbReference type="ArachnoServer" id="AS000030">
    <property type="toxin name" value="U1-nemetoxin-Csp1c"/>
</dbReference>
<dbReference type="GO" id="GO:0005576">
    <property type="term" value="C:extracellular region"/>
    <property type="evidence" value="ECO:0007669"/>
    <property type="project" value="UniProtKB-SubCell"/>
</dbReference>
<dbReference type="GO" id="GO:0090729">
    <property type="term" value="F:toxin activity"/>
    <property type="evidence" value="ECO:0007669"/>
    <property type="project" value="UniProtKB-KW"/>
</dbReference>
<dbReference type="InterPro" id="IPR012626">
    <property type="entry name" value="Spider_insecticidal_peptide"/>
</dbReference>
<dbReference type="Pfam" id="PF08091">
    <property type="entry name" value="Toxin_21"/>
    <property type="match status" value="1"/>
</dbReference>
<accession>P60978</accession>